<protein>
    <recommendedName>
        <fullName>Synaptosomal-associated protein 23</fullName>
        <shortName>SNAP-23</shortName>
    </recommendedName>
    <alternativeName>
        <fullName>Vesicle-membrane fusion protein SNAP-23</fullName>
    </alternativeName>
</protein>
<comment type="function">
    <text evidence="1">Essential component of the high affinity receptor for the general membrane fusion machinery and an important regulator of transport vesicle docking and fusion.</text>
</comment>
<comment type="subunit">
    <text evidence="2 3 6">Homotetramer (via coiled-coil domain), also forms heterotetramers with STX4 and VAMP3 (By similarity). Found in a complex with VAMP8 and STX1A (By similarity). Found in a complex with VAMP8 and STX4 in pancreas (By similarity). Interacts simultaneously with SNAPIN and SYN4 (By similarity). Interacts with STX1A (By similarity). Interacts with STX12 (By similarity). Interacts tightly to multiple syntaxins and synaptobrevins/VAMPs (PubMed:14993220). Interacts with ZDHHC13 (via ANK repeats) (By similarity). Interacts with ZDHHC17 (via ANK repeats) (By similarity).</text>
</comment>
<comment type="interaction">
    <interactant intactId="EBI-1573765">
        <id>O70377</id>
    </interactant>
    <interactant intactId="EBI-1812464">
        <id>Q9QY78</id>
        <label>Ikbkb</label>
    </interactant>
    <organismsDiffer>false</organismsDiffer>
    <experiments>2</experiments>
</comment>
<comment type="subcellular location">
    <subcellularLocation>
        <location evidence="1">Cell membrane</location>
        <topology evidence="1">Peripheral membrane protein</topology>
    </subcellularLocation>
    <subcellularLocation>
        <location evidence="1">Cell membrane</location>
        <topology evidence="1">Lipid-anchor</topology>
    </subcellularLocation>
    <subcellularLocation>
        <location evidence="1">Synapse</location>
        <location evidence="1">Synaptosome</location>
    </subcellularLocation>
    <subcellularLocation>
        <location evidence="1">Cytoplasmic vesicle membrane</location>
        <topology evidence="1">Peripheral membrane protein</topology>
    </subcellularLocation>
    <text evidence="1">Mainly localized to the plasma membrane.</text>
</comment>
<comment type="similarity">
    <text evidence="7">Belongs to the SNAP-25 family.</text>
</comment>
<name>SNP23_RAT</name>
<dbReference type="EMBL" id="AF052596">
    <property type="protein sequence ID" value="AAC06031.1"/>
    <property type="molecule type" value="mRNA"/>
</dbReference>
<dbReference type="EMBL" id="BC127494">
    <property type="protein sequence ID" value="AAI27495.1"/>
    <property type="molecule type" value="mRNA"/>
</dbReference>
<dbReference type="RefSeq" id="NP_001416399.1">
    <property type="nucleotide sequence ID" value="NM_001429470.1"/>
</dbReference>
<dbReference type="RefSeq" id="NP_073180.1">
    <property type="nucleotide sequence ID" value="NM_022689.2"/>
</dbReference>
<dbReference type="RefSeq" id="XP_063140595.1">
    <property type="nucleotide sequence ID" value="XM_063284525.1"/>
</dbReference>
<dbReference type="RefSeq" id="XP_063140596.1">
    <property type="nucleotide sequence ID" value="XM_063284526.1"/>
</dbReference>
<dbReference type="SMR" id="O70377"/>
<dbReference type="BioGRID" id="249168">
    <property type="interactions" value="2"/>
</dbReference>
<dbReference type="CORUM" id="O70377"/>
<dbReference type="FunCoup" id="O70377">
    <property type="interactions" value="2311"/>
</dbReference>
<dbReference type="IntAct" id="O70377">
    <property type="interactions" value="7"/>
</dbReference>
<dbReference type="MINT" id="O70377"/>
<dbReference type="STRING" id="10116.ENSRNOP00000064401"/>
<dbReference type="iPTMnet" id="O70377"/>
<dbReference type="PhosphoSitePlus" id="O70377"/>
<dbReference type="SwissPalm" id="O70377"/>
<dbReference type="Ensembl" id="ENSRNOT00000096953.1">
    <property type="protein sequence ID" value="ENSRNOP00000091304.1"/>
    <property type="gene ID" value="ENSRNOG00000050552.3"/>
</dbReference>
<dbReference type="GeneID" id="64630"/>
<dbReference type="KEGG" id="rno:64630"/>
<dbReference type="UCSC" id="RGD:620221">
    <property type="organism name" value="rat"/>
</dbReference>
<dbReference type="AGR" id="RGD:620221"/>
<dbReference type="CTD" id="8773"/>
<dbReference type="RGD" id="620221">
    <property type="gene designation" value="Snap23"/>
</dbReference>
<dbReference type="GeneTree" id="ENSGT00950000182843"/>
<dbReference type="InParanoid" id="O70377"/>
<dbReference type="PhylomeDB" id="O70377"/>
<dbReference type="Reactome" id="R-RNO-1236974">
    <property type="pathway name" value="ER-Phagosome pathway"/>
</dbReference>
<dbReference type="Reactome" id="R-RNO-199992">
    <property type="pathway name" value="trans-Golgi Network Vesicle Budding"/>
</dbReference>
<dbReference type="Reactome" id="R-RNO-6798695">
    <property type="pathway name" value="Neutrophil degranulation"/>
</dbReference>
<dbReference type="Reactome" id="R-RNO-8980692">
    <property type="pathway name" value="RHOA GTPase cycle"/>
</dbReference>
<dbReference type="Reactome" id="R-RNO-9013026">
    <property type="pathway name" value="RHOB GTPase cycle"/>
</dbReference>
<dbReference type="Reactome" id="R-RNO-9013149">
    <property type="pathway name" value="RAC1 GTPase cycle"/>
</dbReference>
<dbReference type="Reactome" id="R-RNO-9013406">
    <property type="pathway name" value="RHOQ GTPase cycle"/>
</dbReference>
<dbReference type="Reactome" id="R-RNO-9035034">
    <property type="pathway name" value="RHOF GTPase cycle"/>
</dbReference>
<dbReference type="PRO" id="PR:O70377"/>
<dbReference type="Proteomes" id="UP000002494">
    <property type="component" value="Chromosome 3"/>
</dbReference>
<dbReference type="GO" id="GO:0005912">
    <property type="term" value="C:adherens junction"/>
    <property type="evidence" value="ECO:0000266"/>
    <property type="project" value="RGD"/>
</dbReference>
<dbReference type="GO" id="GO:0042582">
    <property type="term" value="C:azurophil granule"/>
    <property type="evidence" value="ECO:0000266"/>
    <property type="project" value="RGD"/>
</dbReference>
<dbReference type="GO" id="GO:0005737">
    <property type="term" value="C:cytoplasm"/>
    <property type="evidence" value="ECO:0000266"/>
    <property type="project" value="RGD"/>
</dbReference>
<dbReference type="GO" id="GO:0031410">
    <property type="term" value="C:cytoplasmic vesicle"/>
    <property type="evidence" value="ECO:0000266"/>
    <property type="project" value="RGD"/>
</dbReference>
<dbReference type="GO" id="GO:0030659">
    <property type="term" value="C:cytoplasmic vesicle membrane"/>
    <property type="evidence" value="ECO:0007669"/>
    <property type="project" value="UniProtKB-SubCell"/>
</dbReference>
<dbReference type="GO" id="GO:0098982">
    <property type="term" value="C:GABA-ergic synapse"/>
    <property type="evidence" value="ECO:0000314"/>
    <property type="project" value="SynGO"/>
</dbReference>
<dbReference type="GO" id="GO:0098978">
    <property type="term" value="C:glutamatergic synapse"/>
    <property type="evidence" value="ECO:0000314"/>
    <property type="project" value="SynGO"/>
</dbReference>
<dbReference type="GO" id="GO:0005739">
    <property type="term" value="C:mitochondrion"/>
    <property type="evidence" value="ECO:0000266"/>
    <property type="project" value="RGD"/>
</dbReference>
<dbReference type="GO" id="GO:0005886">
    <property type="term" value="C:plasma membrane"/>
    <property type="evidence" value="ECO:0000266"/>
    <property type="project" value="RGD"/>
</dbReference>
<dbReference type="GO" id="GO:0098794">
    <property type="term" value="C:postsynapse"/>
    <property type="evidence" value="ECO:0000314"/>
    <property type="project" value="SynGO"/>
</dbReference>
<dbReference type="GO" id="GO:0031201">
    <property type="term" value="C:SNARE complex"/>
    <property type="evidence" value="ECO:0000314"/>
    <property type="project" value="UniProtKB"/>
</dbReference>
<dbReference type="GO" id="GO:0042581">
    <property type="term" value="C:specific granule"/>
    <property type="evidence" value="ECO:0000266"/>
    <property type="project" value="RGD"/>
</dbReference>
<dbReference type="GO" id="GO:0043195">
    <property type="term" value="C:terminal bouton"/>
    <property type="evidence" value="ECO:0007005"/>
    <property type="project" value="ParkinsonsUK-UCL"/>
</dbReference>
<dbReference type="GO" id="GO:0005484">
    <property type="term" value="F:SNAP receptor activity"/>
    <property type="evidence" value="ECO:0000314"/>
    <property type="project" value="FlyBase"/>
</dbReference>
<dbReference type="GO" id="GO:0019905">
    <property type="term" value="F:syntaxin binding"/>
    <property type="evidence" value="ECO:0000353"/>
    <property type="project" value="RGD"/>
</dbReference>
<dbReference type="GO" id="GO:0098967">
    <property type="term" value="P:exocytic insertion of neurotransmitter receptor to postsynaptic membrane"/>
    <property type="evidence" value="ECO:0000314"/>
    <property type="project" value="SynGO"/>
</dbReference>
<dbReference type="GO" id="GO:0006887">
    <property type="term" value="P:exocytosis"/>
    <property type="evidence" value="ECO:0000266"/>
    <property type="project" value="RGD"/>
</dbReference>
<dbReference type="GO" id="GO:0002553">
    <property type="term" value="P:histamine secretion by mast cell"/>
    <property type="evidence" value="ECO:0000266"/>
    <property type="project" value="RGD"/>
</dbReference>
<dbReference type="GO" id="GO:0061025">
    <property type="term" value="P:membrane fusion"/>
    <property type="evidence" value="ECO:0000314"/>
    <property type="project" value="RGD"/>
</dbReference>
<dbReference type="GO" id="GO:0065003">
    <property type="term" value="P:protein-containing complex assembly"/>
    <property type="evidence" value="ECO:0000314"/>
    <property type="project" value="RGD"/>
</dbReference>
<dbReference type="GO" id="GO:0017157">
    <property type="term" value="P:regulation of exocytosis"/>
    <property type="evidence" value="ECO:0000315"/>
    <property type="project" value="RGD"/>
</dbReference>
<dbReference type="GO" id="GO:0031629">
    <property type="term" value="P:synaptic vesicle fusion to presynaptic active zone membrane"/>
    <property type="evidence" value="ECO:0000318"/>
    <property type="project" value="GO_Central"/>
</dbReference>
<dbReference type="GO" id="GO:0016082">
    <property type="term" value="P:synaptic vesicle priming"/>
    <property type="evidence" value="ECO:0000318"/>
    <property type="project" value="GO_Central"/>
</dbReference>
<dbReference type="GO" id="GO:0016192">
    <property type="term" value="P:vesicle-mediated transport"/>
    <property type="evidence" value="ECO:0000315"/>
    <property type="project" value="RGD"/>
</dbReference>
<dbReference type="GO" id="GO:0099003">
    <property type="term" value="P:vesicle-mediated transport in synapse"/>
    <property type="evidence" value="ECO:0000314"/>
    <property type="project" value="SynGO"/>
</dbReference>
<dbReference type="CDD" id="cd15884">
    <property type="entry name" value="SNARE_SNAP23C"/>
    <property type="match status" value="1"/>
</dbReference>
<dbReference type="CDD" id="cd15895">
    <property type="entry name" value="SNARE_SNAP23N"/>
    <property type="match status" value="1"/>
</dbReference>
<dbReference type="FunFam" id="1.20.5.110:FF:000007">
    <property type="entry name" value="Synaptosomal-associated protein"/>
    <property type="match status" value="1"/>
</dbReference>
<dbReference type="FunFam" id="1.20.5.110:FF:000018">
    <property type="entry name" value="Synaptosomal-associated protein"/>
    <property type="match status" value="1"/>
</dbReference>
<dbReference type="Gene3D" id="1.20.5.110">
    <property type="match status" value="2"/>
</dbReference>
<dbReference type="InterPro" id="IPR000928">
    <property type="entry name" value="SNAP-25_dom"/>
</dbReference>
<dbReference type="InterPro" id="IPR000727">
    <property type="entry name" value="T_SNARE_dom"/>
</dbReference>
<dbReference type="PANTHER" id="PTHR19305">
    <property type="entry name" value="SYNAPTOSOMAL ASSOCIATED PROTEIN"/>
    <property type="match status" value="1"/>
</dbReference>
<dbReference type="PANTHER" id="PTHR19305:SF4">
    <property type="entry name" value="SYNAPTOSOMAL-ASSOCIATED PROTEIN 23"/>
    <property type="match status" value="1"/>
</dbReference>
<dbReference type="Pfam" id="PF00835">
    <property type="entry name" value="SNAP-25"/>
    <property type="match status" value="1"/>
</dbReference>
<dbReference type="SMART" id="SM00397">
    <property type="entry name" value="t_SNARE"/>
    <property type="match status" value="2"/>
</dbReference>
<dbReference type="SUPFAM" id="SSF58038">
    <property type="entry name" value="SNARE fusion complex"/>
    <property type="match status" value="2"/>
</dbReference>
<dbReference type="PROSITE" id="PS50192">
    <property type="entry name" value="T_SNARE"/>
    <property type="match status" value="2"/>
</dbReference>
<sequence length="210" mass="23235">MDDLSPEEIQLRAHQVTDESLESTRRILGLAIESQDAGIKTITMLDEQGEQLNRIEEGMDQINKDMREAEKTLTELNKCCGLCVCPCNRTKNFESGKNYKATWGDGGDSSPSNVVSKQPSRITNGQPQQTTGAASGGYIKRITNDAREDEMEENLTQVGSILGNLKNMALDMGNEIDAQNQQIQKITEKADTNKNRIDIANTRAKKLIDS</sequence>
<reference key="1">
    <citation type="journal article" date="1999" name="Biochem. J.">
        <title>SNAP-23 participates in SNARE complex assembly in rat adipose cells.</title>
        <authorList>
            <person name="St Denis J.-F."/>
            <person name="Cabaniols J.-P."/>
            <person name="Cushman S.W."/>
            <person name="Roche P.A."/>
        </authorList>
    </citation>
    <scope>NUCLEOTIDE SEQUENCE [MRNA]</scope>
</reference>
<reference key="2">
    <citation type="journal article" date="2004" name="Genome Res.">
        <title>The status, quality, and expansion of the NIH full-length cDNA project: the Mammalian Gene Collection (MGC).</title>
        <authorList>
            <consortium name="The MGC Project Team"/>
        </authorList>
    </citation>
    <scope>NUCLEOTIDE SEQUENCE [LARGE SCALE MRNA]</scope>
    <source>
        <tissue>Brain</tissue>
    </source>
</reference>
<reference key="3">
    <citation type="journal article" date="2004" name="J. Biol. Chem.">
        <title>Identification of SNAREs involved in synaptotagmin VII-regulated lysosomal exocytosis.</title>
        <authorList>
            <person name="Rao S.K."/>
            <person name="Huynh C."/>
            <person name="Proux-Gillardeaux V."/>
            <person name="Galli T."/>
            <person name="Andrews N.W."/>
        </authorList>
    </citation>
    <scope>SNARE COMPLEX CHARACTERIZATION</scope>
</reference>
<reference key="4">
    <citation type="submission" date="2007-09" db="UniProtKB">
        <authorList>
            <person name="Lubec G."/>
            <person name="Kang S.U."/>
            <person name="Lubec S."/>
        </authorList>
    </citation>
    <scope>PROTEIN SEQUENCE OF 55-64</scope>
    <scope>IDENTIFICATION BY MASS SPECTROMETRY</scope>
    <source>
        <strain>Sprague-Dawley</strain>
        <tissue>Brain</tissue>
    </source>
</reference>
<evidence type="ECO:0000250" key="1"/>
<evidence type="ECO:0000250" key="2">
    <source>
        <dbReference type="UniProtKB" id="O00161"/>
    </source>
</evidence>
<evidence type="ECO:0000250" key="3">
    <source>
        <dbReference type="UniProtKB" id="O09044"/>
    </source>
</evidence>
<evidence type="ECO:0000255" key="4">
    <source>
        <dbReference type="PROSITE-ProRule" id="PRU00202"/>
    </source>
</evidence>
<evidence type="ECO:0000256" key="5">
    <source>
        <dbReference type="SAM" id="MobiDB-lite"/>
    </source>
</evidence>
<evidence type="ECO:0000269" key="6">
    <source>
    </source>
</evidence>
<evidence type="ECO:0000305" key="7"/>
<accession>O70377</accession>
<accession>A0JPL8</accession>
<organism>
    <name type="scientific">Rattus norvegicus</name>
    <name type="common">Rat</name>
    <dbReference type="NCBI Taxonomy" id="10116"/>
    <lineage>
        <taxon>Eukaryota</taxon>
        <taxon>Metazoa</taxon>
        <taxon>Chordata</taxon>
        <taxon>Craniata</taxon>
        <taxon>Vertebrata</taxon>
        <taxon>Euteleostomi</taxon>
        <taxon>Mammalia</taxon>
        <taxon>Eutheria</taxon>
        <taxon>Euarchontoglires</taxon>
        <taxon>Glires</taxon>
        <taxon>Rodentia</taxon>
        <taxon>Myomorpha</taxon>
        <taxon>Muroidea</taxon>
        <taxon>Muridae</taxon>
        <taxon>Murinae</taxon>
        <taxon>Rattus</taxon>
    </lineage>
</organism>
<feature type="chain" id="PRO_0000213600" description="Synaptosomal-associated protein 23">
    <location>
        <begin position="1"/>
        <end position="210"/>
    </location>
</feature>
<feature type="domain" description="t-SNARE coiled-coil homology 1" evidence="4">
    <location>
        <begin position="14"/>
        <end position="76"/>
    </location>
</feature>
<feature type="domain" description="t-SNARE coiled-coil homology 2" evidence="4">
    <location>
        <begin position="145"/>
        <end position="207"/>
    </location>
</feature>
<feature type="region of interest" description="Disordered" evidence="5">
    <location>
        <begin position="104"/>
        <end position="136"/>
    </location>
</feature>
<feature type="coiled-coil region" evidence="1">
    <location>
        <begin position="23"/>
        <end position="76"/>
    </location>
</feature>
<feature type="compositionally biased region" description="Polar residues" evidence="5">
    <location>
        <begin position="109"/>
        <end position="133"/>
    </location>
</feature>
<feature type="modified residue" description="N-acetylmethionine" evidence="2">
    <location>
        <position position="1"/>
    </location>
</feature>
<feature type="modified residue" description="Phosphoserine" evidence="2">
    <location>
        <position position="5"/>
    </location>
</feature>
<feature type="modified residue" description="Phosphoserine" evidence="2">
    <location>
        <position position="20"/>
    </location>
</feature>
<feature type="modified residue" description="Phosphoserine" evidence="3">
    <location>
        <position position="23"/>
    </location>
</feature>
<feature type="modified residue" description="Phosphoserine" evidence="2">
    <location>
        <position position="34"/>
    </location>
</feature>
<feature type="modified residue" description="Phosphoserine" evidence="2">
    <location>
        <position position="110"/>
    </location>
</feature>
<feature type="modified residue" description="Phosphoserine" evidence="2">
    <location>
        <position position="160"/>
    </location>
</feature>
<feature type="lipid moiety-binding region" description="S-palmitoyl cysteine" evidence="1">
    <location>
        <position position="79"/>
    </location>
</feature>
<feature type="lipid moiety-binding region" description="S-palmitoyl cysteine" evidence="1">
    <location>
        <position position="80"/>
    </location>
</feature>
<feature type="lipid moiety-binding region" description="S-palmitoyl cysteine" evidence="1">
    <location>
        <position position="83"/>
    </location>
</feature>
<feature type="lipid moiety-binding region" description="S-palmitoyl cysteine" evidence="1">
    <location>
        <position position="85"/>
    </location>
</feature>
<feature type="lipid moiety-binding region" description="S-palmitoyl cysteine" evidence="1">
    <location>
        <position position="87"/>
    </location>
</feature>
<keyword id="KW-0007">Acetylation</keyword>
<keyword id="KW-1003">Cell membrane</keyword>
<keyword id="KW-0175">Coiled coil</keyword>
<keyword id="KW-0968">Cytoplasmic vesicle</keyword>
<keyword id="KW-0903">Direct protein sequencing</keyword>
<keyword id="KW-0449">Lipoprotein</keyword>
<keyword id="KW-0472">Membrane</keyword>
<keyword id="KW-0564">Palmitate</keyword>
<keyword id="KW-0597">Phosphoprotein</keyword>
<keyword id="KW-0653">Protein transport</keyword>
<keyword id="KW-1185">Reference proteome</keyword>
<keyword id="KW-0677">Repeat</keyword>
<keyword id="KW-0770">Synapse</keyword>
<keyword id="KW-0771">Synaptosome</keyword>
<keyword id="KW-0813">Transport</keyword>
<proteinExistence type="evidence at protein level"/>
<gene>
    <name type="primary">Snap23</name>
</gene>